<dbReference type="EC" id="2.7.4.9" evidence="1"/>
<dbReference type="EMBL" id="CP000151">
    <property type="protein sequence ID" value="ABB08787.1"/>
    <property type="molecule type" value="Genomic_DNA"/>
</dbReference>
<dbReference type="RefSeq" id="WP_011352332.1">
    <property type="nucleotide sequence ID" value="NC_007510.1"/>
</dbReference>
<dbReference type="SMR" id="Q39FH9"/>
<dbReference type="GeneID" id="45095069"/>
<dbReference type="KEGG" id="bur:Bcep18194_A5193"/>
<dbReference type="PATRIC" id="fig|482957.22.peg.2132"/>
<dbReference type="HOGENOM" id="CLU_049131_0_2_4"/>
<dbReference type="Proteomes" id="UP000002705">
    <property type="component" value="Chromosome 1"/>
</dbReference>
<dbReference type="GO" id="GO:0005829">
    <property type="term" value="C:cytosol"/>
    <property type="evidence" value="ECO:0007669"/>
    <property type="project" value="TreeGrafter"/>
</dbReference>
<dbReference type="GO" id="GO:0005524">
    <property type="term" value="F:ATP binding"/>
    <property type="evidence" value="ECO:0007669"/>
    <property type="project" value="UniProtKB-UniRule"/>
</dbReference>
<dbReference type="GO" id="GO:0004798">
    <property type="term" value="F:dTMP kinase activity"/>
    <property type="evidence" value="ECO:0007669"/>
    <property type="project" value="UniProtKB-UniRule"/>
</dbReference>
<dbReference type="GO" id="GO:0006233">
    <property type="term" value="P:dTDP biosynthetic process"/>
    <property type="evidence" value="ECO:0007669"/>
    <property type="project" value="InterPro"/>
</dbReference>
<dbReference type="GO" id="GO:0006235">
    <property type="term" value="P:dTTP biosynthetic process"/>
    <property type="evidence" value="ECO:0007669"/>
    <property type="project" value="UniProtKB-UniRule"/>
</dbReference>
<dbReference type="GO" id="GO:0006227">
    <property type="term" value="P:dUDP biosynthetic process"/>
    <property type="evidence" value="ECO:0007669"/>
    <property type="project" value="TreeGrafter"/>
</dbReference>
<dbReference type="CDD" id="cd01672">
    <property type="entry name" value="TMPK"/>
    <property type="match status" value="1"/>
</dbReference>
<dbReference type="FunFam" id="3.40.50.300:FF:000225">
    <property type="entry name" value="Thymidylate kinase"/>
    <property type="match status" value="1"/>
</dbReference>
<dbReference type="Gene3D" id="3.40.50.300">
    <property type="entry name" value="P-loop containing nucleotide triphosphate hydrolases"/>
    <property type="match status" value="1"/>
</dbReference>
<dbReference type="HAMAP" id="MF_00165">
    <property type="entry name" value="Thymidylate_kinase"/>
    <property type="match status" value="1"/>
</dbReference>
<dbReference type="InterPro" id="IPR027417">
    <property type="entry name" value="P-loop_NTPase"/>
</dbReference>
<dbReference type="InterPro" id="IPR039430">
    <property type="entry name" value="Thymidylate_kin-like_dom"/>
</dbReference>
<dbReference type="InterPro" id="IPR018094">
    <property type="entry name" value="Thymidylate_kinase"/>
</dbReference>
<dbReference type="NCBIfam" id="TIGR00041">
    <property type="entry name" value="DTMP_kinase"/>
    <property type="match status" value="1"/>
</dbReference>
<dbReference type="PANTHER" id="PTHR10344">
    <property type="entry name" value="THYMIDYLATE KINASE"/>
    <property type="match status" value="1"/>
</dbReference>
<dbReference type="PANTHER" id="PTHR10344:SF4">
    <property type="entry name" value="UMP-CMP KINASE 2, MITOCHONDRIAL"/>
    <property type="match status" value="1"/>
</dbReference>
<dbReference type="Pfam" id="PF02223">
    <property type="entry name" value="Thymidylate_kin"/>
    <property type="match status" value="1"/>
</dbReference>
<dbReference type="SUPFAM" id="SSF52540">
    <property type="entry name" value="P-loop containing nucleoside triphosphate hydrolases"/>
    <property type="match status" value="1"/>
</dbReference>
<proteinExistence type="inferred from homology"/>
<reference key="1">
    <citation type="submission" date="2005-10" db="EMBL/GenBank/DDBJ databases">
        <title>Complete sequence of chromosome 1 of Burkholderia sp. 383.</title>
        <authorList>
            <consortium name="US DOE Joint Genome Institute"/>
            <person name="Copeland A."/>
            <person name="Lucas S."/>
            <person name="Lapidus A."/>
            <person name="Barry K."/>
            <person name="Detter J.C."/>
            <person name="Glavina T."/>
            <person name="Hammon N."/>
            <person name="Israni S."/>
            <person name="Pitluck S."/>
            <person name="Chain P."/>
            <person name="Malfatti S."/>
            <person name="Shin M."/>
            <person name="Vergez L."/>
            <person name="Schmutz J."/>
            <person name="Larimer F."/>
            <person name="Land M."/>
            <person name="Kyrpides N."/>
            <person name="Lykidis A."/>
            <person name="Richardson P."/>
        </authorList>
    </citation>
    <scope>NUCLEOTIDE SEQUENCE [LARGE SCALE GENOMIC DNA]</scope>
    <source>
        <strain>ATCC 17760 / DSM 23089 / LMG 22485 / NCIMB 9086 / R18194 / 383</strain>
    </source>
</reference>
<name>KTHY_BURL3</name>
<comment type="function">
    <text evidence="1">Phosphorylation of dTMP to form dTDP in both de novo and salvage pathways of dTTP synthesis.</text>
</comment>
<comment type="catalytic activity">
    <reaction evidence="1">
        <text>dTMP + ATP = dTDP + ADP</text>
        <dbReference type="Rhea" id="RHEA:13517"/>
        <dbReference type="ChEBI" id="CHEBI:30616"/>
        <dbReference type="ChEBI" id="CHEBI:58369"/>
        <dbReference type="ChEBI" id="CHEBI:63528"/>
        <dbReference type="ChEBI" id="CHEBI:456216"/>
        <dbReference type="EC" id="2.7.4.9"/>
    </reaction>
</comment>
<comment type="similarity">
    <text evidence="1">Belongs to the thymidylate kinase family.</text>
</comment>
<evidence type="ECO:0000255" key="1">
    <source>
        <dbReference type="HAMAP-Rule" id="MF_00165"/>
    </source>
</evidence>
<feature type="chain" id="PRO_1000023164" description="Thymidylate kinase">
    <location>
        <begin position="1"/>
        <end position="206"/>
    </location>
</feature>
<feature type="binding site" evidence="1">
    <location>
        <begin position="11"/>
        <end position="18"/>
    </location>
    <ligand>
        <name>ATP</name>
        <dbReference type="ChEBI" id="CHEBI:30616"/>
    </ligand>
</feature>
<keyword id="KW-0067">ATP-binding</keyword>
<keyword id="KW-0418">Kinase</keyword>
<keyword id="KW-0545">Nucleotide biosynthesis</keyword>
<keyword id="KW-0547">Nucleotide-binding</keyword>
<keyword id="KW-0808">Transferase</keyword>
<sequence>MASGKFITFEGIDGAGKTTHLQWFCERLQGKLAAAGRQVVVTREPGGTQLGEKLREILLNQPMDLETEALLMFAARREHLALVIEPALARGDWVVSDRFTDATFAYQGGGRGLPRDKLETLERWVQGGFQPDLTVLFDVAPQVASERRGAARMPDKFESESDAFFSRTRSEYLRRAEEAPHRFAIVDATQTIPEIRHQLERVLAAL</sequence>
<organism>
    <name type="scientific">Burkholderia lata (strain ATCC 17760 / DSM 23089 / LMG 22485 / NCIMB 9086 / R18194 / 383)</name>
    <dbReference type="NCBI Taxonomy" id="482957"/>
    <lineage>
        <taxon>Bacteria</taxon>
        <taxon>Pseudomonadati</taxon>
        <taxon>Pseudomonadota</taxon>
        <taxon>Betaproteobacteria</taxon>
        <taxon>Burkholderiales</taxon>
        <taxon>Burkholderiaceae</taxon>
        <taxon>Burkholderia</taxon>
        <taxon>Burkholderia cepacia complex</taxon>
    </lineage>
</organism>
<gene>
    <name evidence="1" type="primary">tmk</name>
    <name type="ordered locus">Bcep18194_A5193</name>
</gene>
<accession>Q39FH9</accession>
<protein>
    <recommendedName>
        <fullName evidence="1">Thymidylate kinase</fullName>
        <ecNumber evidence="1">2.7.4.9</ecNumber>
    </recommendedName>
    <alternativeName>
        <fullName evidence="1">dTMP kinase</fullName>
    </alternativeName>
</protein>